<feature type="chain" id="PRO_1000123478" description="Lipoprotein signal peptidase">
    <location>
        <begin position="1"/>
        <end position="163"/>
    </location>
</feature>
<feature type="transmembrane region" description="Helical" evidence="1">
    <location>
        <begin position="4"/>
        <end position="24"/>
    </location>
</feature>
<feature type="transmembrane region" description="Helical" evidence="1">
    <location>
        <begin position="66"/>
        <end position="86"/>
    </location>
</feature>
<feature type="transmembrane region" description="Helical" evidence="1">
    <location>
        <begin position="92"/>
        <end position="112"/>
    </location>
</feature>
<feature type="transmembrane region" description="Helical" evidence="1">
    <location>
        <begin position="132"/>
        <end position="152"/>
    </location>
</feature>
<feature type="active site" evidence="1">
    <location>
        <position position="122"/>
    </location>
</feature>
<feature type="active site" evidence="1">
    <location>
        <position position="140"/>
    </location>
</feature>
<organism>
    <name type="scientific">Allorhizobium ampelinum (strain ATCC BAA-846 / DSM 112012 / S4)</name>
    <name type="common">Agrobacterium vitis (strain S4)</name>
    <dbReference type="NCBI Taxonomy" id="311402"/>
    <lineage>
        <taxon>Bacteria</taxon>
        <taxon>Pseudomonadati</taxon>
        <taxon>Pseudomonadota</taxon>
        <taxon>Alphaproteobacteria</taxon>
        <taxon>Hyphomicrobiales</taxon>
        <taxon>Rhizobiaceae</taxon>
        <taxon>Rhizobium/Agrobacterium group</taxon>
        <taxon>Allorhizobium</taxon>
        <taxon>Allorhizobium ampelinum</taxon>
    </lineage>
</organism>
<proteinExistence type="inferred from homology"/>
<gene>
    <name evidence="1" type="primary">lspA</name>
    <name type="ordered locus">Avi_0415</name>
</gene>
<keyword id="KW-0064">Aspartyl protease</keyword>
<keyword id="KW-0997">Cell inner membrane</keyword>
<keyword id="KW-1003">Cell membrane</keyword>
<keyword id="KW-0378">Hydrolase</keyword>
<keyword id="KW-0472">Membrane</keyword>
<keyword id="KW-0645">Protease</keyword>
<keyword id="KW-1185">Reference proteome</keyword>
<keyword id="KW-0812">Transmembrane</keyword>
<keyword id="KW-1133">Transmembrane helix</keyword>
<comment type="function">
    <text evidence="1">This protein specifically catalyzes the removal of signal peptides from prolipoproteins.</text>
</comment>
<comment type="catalytic activity">
    <reaction evidence="1">
        <text>Release of signal peptides from bacterial membrane prolipoproteins. Hydrolyzes -Xaa-Yaa-Zaa-|-(S,diacylglyceryl)Cys-, in which Xaa is hydrophobic (preferably Leu), and Yaa (Ala or Ser) and Zaa (Gly or Ala) have small, neutral side chains.</text>
        <dbReference type="EC" id="3.4.23.36"/>
    </reaction>
</comment>
<comment type="pathway">
    <text evidence="1">Protein modification; lipoprotein biosynthesis (signal peptide cleavage).</text>
</comment>
<comment type="subcellular location">
    <subcellularLocation>
        <location evidence="1">Cell inner membrane</location>
        <topology evidence="1">Multi-pass membrane protein</topology>
    </subcellularLocation>
</comment>
<comment type="similarity">
    <text evidence="1">Belongs to the peptidase A8 family.</text>
</comment>
<accession>B9JZH6</accession>
<name>LSPA_ALLAM</name>
<sequence>MTRSAALFCRPVPAILFILSLLILDQAIKYAVEVSLPMHELVPVVPMLGLFRTHNLGVAFSMLSHLDAWVIVVMRLAIVAFVAWLWRQTSRDHQFAHLGYCLIIAGAFGNIIDRFTYGYVVDYILFHTETWSFAVFNLADSLITIGAGFILLEELLVLRRSKG</sequence>
<evidence type="ECO:0000255" key="1">
    <source>
        <dbReference type="HAMAP-Rule" id="MF_00161"/>
    </source>
</evidence>
<dbReference type="EC" id="3.4.23.36" evidence="1"/>
<dbReference type="EMBL" id="CP000633">
    <property type="protein sequence ID" value="ACM35288.1"/>
    <property type="molecule type" value="Genomic_DNA"/>
</dbReference>
<dbReference type="RefSeq" id="WP_012654818.1">
    <property type="nucleotide sequence ID" value="NC_011989.1"/>
</dbReference>
<dbReference type="SMR" id="B9JZH6"/>
<dbReference type="STRING" id="311402.Avi_0415"/>
<dbReference type="KEGG" id="avi:Avi_0415"/>
<dbReference type="eggNOG" id="COG0597">
    <property type="taxonomic scope" value="Bacteria"/>
</dbReference>
<dbReference type="HOGENOM" id="CLU_083252_4_3_5"/>
<dbReference type="UniPathway" id="UPA00665"/>
<dbReference type="Proteomes" id="UP000001596">
    <property type="component" value="Chromosome 1"/>
</dbReference>
<dbReference type="GO" id="GO:0005886">
    <property type="term" value="C:plasma membrane"/>
    <property type="evidence" value="ECO:0007669"/>
    <property type="project" value="UniProtKB-SubCell"/>
</dbReference>
<dbReference type="GO" id="GO:0004190">
    <property type="term" value="F:aspartic-type endopeptidase activity"/>
    <property type="evidence" value="ECO:0007669"/>
    <property type="project" value="UniProtKB-UniRule"/>
</dbReference>
<dbReference type="GO" id="GO:0006508">
    <property type="term" value="P:proteolysis"/>
    <property type="evidence" value="ECO:0007669"/>
    <property type="project" value="UniProtKB-KW"/>
</dbReference>
<dbReference type="HAMAP" id="MF_00161">
    <property type="entry name" value="LspA"/>
    <property type="match status" value="1"/>
</dbReference>
<dbReference type="InterPro" id="IPR001872">
    <property type="entry name" value="Peptidase_A8"/>
</dbReference>
<dbReference type="NCBIfam" id="TIGR00077">
    <property type="entry name" value="lspA"/>
    <property type="match status" value="1"/>
</dbReference>
<dbReference type="PANTHER" id="PTHR33695">
    <property type="entry name" value="LIPOPROTEIN SIGNAL PEPTIDASE"/>
    <property type="match status" value="1"/>
</dbReference>
<dbReference type="PANTHER" id="PTHR33695:SF1">
    <property type="entry name" value="LIPOPROTEIN SIGNAL PEPTIDASE"/>
    <property type="match status" value="1"/>
</dbReference>
<dbReference type="Pfam" id="PF01252">
    <property type="entry name" value="Peptidase_A8"/>
    <property type="match status" value="1"/>
</dbReference>
<dbReference type="PRINTS" id="PR00781">
    <property type="entry name" value="LIPOSIGPTASE"/>
</dbReference>
<dbReference type="PROSITE" id="PS00855">
    <property type="entry name" value="SPASE_II"/>
    <property type="match status" value="1"/>
</dbReference>
<reference key="1">
    <citation type="journal article" date="2009" name="J. Bacteriol.">
        <title>Genome sequences of three Agrobacterium biovars help elucidate the evolution of multichromosome genomes in bacteria.</title>
        <authorList>
            <person name="Slater S.C."/>
            <person name="Goldman B.S."/>
            <person name="Goodner B."/>
            <person name="Setubal J.C."/>
            <person name="Farrand S.K."/>
            <person name="Nester E.W."/>
            <person name="Burr T.J."/>
            <person name="Banta L."/>
            <person name="Dickerman A.W."/>
            <person name="Paulsen I."/>
            <person name="Otten L."/>
            <person name="Suen G."/>
            <person name="Welch R."/>
            <person name="Almeida N.F."/>
            <person name="Arnold F."/>
            <person name="Burton O.T."/>
            <person name="Du Z."/>
            <person name="Ewing A."/>
            <person name="Godsy E."/>
            <person name="Heisel S."/>
            <person name="Houmiel K.L."/>
            <person name="Jhaveri J."/>
            <person name="Lu J."/>
            <person name="Miller N.M."/>
            <person name="Norton S."/>
            <person name="Chen Q."/>
            <person name="Phoolcharoen W."/>
            <person name="Ohlin V."/>
            <person name="Ondrusek D."/>
            <person name="Pride N."/>
            <person name="Stricklin S.L."/>
            <person name="Sun J."/>
            <person name="Wheeler C."/>
            <person name="Wilson L."/>
            <person name="Zhu H."/>
            <person name="Wood D.W."/>
        </authorList>
    </citation>
    <scope>NUCLEOTIDE SEQUENCE [LARGE SCALE GENOMIC DNA]</scope>
    <source>
        <strain>ATCC BAA-846 / DSM 112012 / S4</strain>
    </source>
</reference>
<protein>
    <recommendedName>
        <fullName evidence="1">Lipoprotein signal peptidase</fullName>
        <ecNumber evidence="1">3.4.23.36</ecNumber>
    </recommendedName>
    <alternativeName>
        <fullName evidence="1">Prolipoprotein signal peptidase</fullName>
    </alternativeName>
    <alternativeName>
        <fullName evidence="1">Signal peptidase II</fullName>
        <shortName evidence="1">SPase II</shortName>
    </alternativeName>
</protein>